<comment type="function">
    <text evidence="1">Tyrosine protein phosphatase which functions as a dosage-dependent inducer of mitotic progression. Directly dephosphorylates CDK1 and stimulates its kinase activity.</text>
</comment>
<comment type="catalytic activity">
    <reaction evidence="1">
        <text>O-phospho-L-tyrosyl-[protein] + H2O = L-tyrosyl-[protein] + phosphate</text>
        <dbReference type="Rhea" id="RHEA:10684"/>
        <dbReference type="Rhea" id="RHEA-COMP:10136"/>
        <dbReference type="Rhea" id="RHEA-COMP:20101"/>
        <dbReference type="ChEBI" id="CHEBI:15377"/>
        <dbReference type="ChEBI" id="CHEBI:43474"/>
        <dbReference type="ChEBI" id="CHEBI:46858"/>
        <dbReference type="ChEBI" id="CHEBI:61978"/>
        <dbReference type="EC" id="3.1.3.48"/>
    </reaction>
    <physiologicalReaction direction="left-to-right" evidence="1">
        <dbReference type="Rhea" id="RHEA:10685"/>
    </physiologicalReaction>
</comment>
<comment type="interaction">
    <interactant intactId="EBI-15888737">
        <id>P30309</id>
    </interactant>
    <interactant intactId="EBI-397744">
        <id>P18654</id>
        <label>Rps6ka3</label>
    </interactant>
    <organismsDiffer>true</organismsDiffer>
    <experiments>3</experiments>
</comment>
<comment type="similarity">
    <text evidence="4">Belongs to the MPI phosphatase family.</text>
</comment>
<evidence type="ECO:0000250" key="1">
    <source>
        <dbReference type="UniProtKB" id="P30304"/>
    </source>
</evidence>
<evidence type="ECO:0000255" key="2">
    <source>
        <dbReference type="PROSITE-ProRule" id="PRU00173"/>
    </source>
</evidence>
<evidence type="ECO:0000256" key="3">
    <source>
        <dbReference type="SAM" id="MobiDB-lite"/>
    </source>
</evidence>
<evidence type="ECO:0000305" key="4"/>
<dbReference type="EC" id="3.1.3.48" evidence="1"/>
<dbReference type="EMBL" id="M94262">
    <property type="protein sequence ID" value="AAA49671.1"/>
    <property type="molecule type" value="mRNA"/>
</dbReference>
<dbReference type="EMBL" id="M96858">
    <property type="protein sequence ID" value="AAA49674.1"/>
    <property type="molecule type" value="mRNA"/>
</dbReference>
<dbReference type="PIR" id="A42679">
    <property type="entry name" value="A42679"/>
</dbReference>
<dbReference type="RefSeq" id="NP_001081918.1">
    <property type="nucleotide sequence ID" value="NM_001088449.1"/>
</dbReference>
<dbReference type="RefSeq" id="XP_018106285.1">
    <property type="nucleotide sequence ID" value="XM_018250796.1"/>
</dbReference>
<dbReference type="SMR" id="P30309"/>
<dbReference type="BioGRID" id="99454">
    <property type="interactions" value="2"/>
</dbReference>
<dbReference type="DIP" id="DIP-176N"/>
<dbReference type="IntAct" id="P30309">
    <property type="interactions" value="1"/>
</dbReference>
<dbReference type="iPTMnet" id="P30309"/>
<dbReference type="GeneID" id="398119"/>
<dbReference type="KEGG" id="xla:398119"/>
<dbReference type="AGR" id="Xenbase:XB-GENE-944825"/>
<dbReference type="CTD" id="398119"/>
<dbReference type="Xenbase" id="XB-GENE-944825">
    <property type="gene designation" value="cdc25c.L"/>
</dbReference>
<dbReference type="OMA" id="HLDSKGP"/>
<dbReference type="OrthoDB" id="26523at2759"/>
<dbReference type="Proteomes" id="UP000186698">
    <property type="component" value="Chromosome 3L"/>
</dbReference>
<dbReference type="GO" id="GO:0005737">
    <property type="term" value="C:cytoplasm"/>
    <property type="evidence" value="ECO:0000318"/>
    <property type="project" value="GO_Central"/>
</dbReference>
<dbReference type="GO" id="GO:0005634">
    <property type="term" value="C:nucleus"/>
    <property type="evidence" value="ECO:0000318"/>
    <property type="project" value="GO_Central"/>
</dbReference>
<dbReference type="GO" id="GO:0004725">
    <property type="term" value="F:protein tyrosine phosphatase activity"/>
    <property type="evidence" value="ECO:0000318"/>
    <property type="project" value="GO_Central"/>
</dbReference>
<dbReference type="GO" id="GO:0051301">
    <property type="term" value="P:cell division"/>
    <property type="evidence" value="ECO:0007669"/>
    <property type="project" value="UniProtKB-KW"/>
</dbReference>
<dbReference type="GO" id="GO:0000086">
    <property type="term" value="P:G2/M transition of mitotic cell cycle"/>
    <property type="evidence" value="ECO:0000318"/>
    <property type="project" value="GO_Central"/>
</dbReference>
<dbReference type="GO" id="GO:0010971">
    <property type="term" value="P:positive regulation of G2/M transition of mitotic cell cycle"/>
    <property type="evidence" value="ECO:0000318"/>
    <property type="project" value="GO_Central"/>
</dbReference>
<dbReference type="GO" id="GO:0110032">
    <property type="term" value="P:positive regulation of G2/MI transition of meiotic cell cycle"/>
    <property type="evidence" value="ECO:0000318"/>
    <property type="project" value="GO_Central"/>
</dbReference>
<dbReference type="CDD" id="cd01530">
    <property type="entry name" value="Cdc25"/>
    <property type="match status" value="1"/>
</dbReference>
<dbReference type="FunFam" id="3.40.250.10:FF:000004">
    <property type="entry name" value="M-phase inducer phosphatase 1 isoform X1"/>
    <property type="match status" value="1"/>
</dbReference>
<dbReference type="Gene3D" id="3.40.250.10">
    <property type="entry name" value="Rhodanese-like domain"/>
    <property type="match status" value="1"/>
</dbReference>
<dbReference type="InterPro" id="IPR000751">
    <property type="entry name" value="MPI_Phosphatase"/>
</dbReference>
<dbReference type="InterPro" id="IPR001763">
    <property type="entry name" value="Rhodanese-like_dom"/>
</dbReference>
<dbReference type="InterPro" id="IPR036873">
    <property type="entry name" value="Rhodanese-like_dom_sf"/>
</dbReference>
<dbReference type="PANTHER" id="PTHR10828:SF64">
    <property type="entry name" value="M-PHASE INDUCER PHOSPHATASE 3"/>
    <property type="match status" value="1"/>
</dbReference>
<dbReference type="PANTHER" id="PTHR10828">
    <property type="entry name" value="M-PHASE INDUCER PHOSPHATASE DUAL SPECIFICITY PHOSPHATASE CDC25"/>
    <property type="match status" value="1"/>
</dbReference>
<dbReference type="Pfam" id="PF06617">
    <property type="entry name" value="M-inducer_phosp"/>
    <property type="match status" value="1"/>
</dbReference>
<dbReference type="Pfam" id="PF00581">
    <property type="entry name" value="Rhodanese"/>
    <property type="match status" value="1"/>
</dbReference>
<dbReference type="PRINTS" id="PR00716">
    <property type="entry name" value="MPIPHPHTASE"/>
</dbReference>
<dbReference type="SMART" id="SM00450">
    <property type="entry name" value="RHOD"/>
    <property type="match status" value="1"/>
</dbReference>
<dbReference type="SUPFAM" id="SSF52821">
    <property type="entry name" value="Rhodanese/Cell cycle control phosphatase"/>
    <property type="match status" value="1"/>
</dbReference>
<dbReference type="PROSITE" id="PS50206">
    <property type="entry name" value="RHODANESE_3"/>
    <property type="match status" value="1"/>
</dbReference>
<proteinExistence type="evidence at protein level"/>
<gene>
    <name type="primary">cdc25-1-b</name>
    <name type="synonym">cdc25b</name>
</gene>
<protein>
    <recommendedName>
        <fullName>M-phase inducer phosphatase 1-B</fullName>
        <ecNumber evidence="1">3.1.3.48</ecNumber>
    </recommendedName>
</protein>
<accession>P30309</accession>
<feature type="chain" id="PRO_0000198652" description="M-phase inducer phosphatase 1-B">
    <location>
        <begin position="1"/>
        <end position="550"/>
    </location>
</feature>
<feature type="domain" description="Rhodanese" evidence="2">
    <location>
        <begin position="401"/>
        <end position="508"/>
    </location>
</feature>
<feature type="region of interest" description="Disordered" evidence="3">
    <location>
        <begin position="76"/>
        <end position="98"/>
    </location>
</feature>
<feature type="region of interest" description="Disordered" evidence="3">
    <location>
        <begin position="285"/>
        <end position="335"/>
    </location>
</feature>
<feature type="compositionally biased region" description="Basic and acidic residues" evidence="3">
    <location>
        <begin position="290"/>
        <end position="310"/>
    </location>
</feature>
<feature type="compositionally biased region" description="Polar residues" evidence="3">
    <location>
        <begin position="322"/>
        <end position="335"/>
    </location>
</feature>
<feature type="active site" evidence="1">
    <location>
        <position position="457"/>
    </location>
</feature>
<keyword id="KW-0131">Cell cycle</keyword>
<keyword id="KW-0132">Cell division</keyword>
<keyword id="KW-0378">Hydrolase</keyword>
<keyword id="KW-0498">Mitosis</keyword>
<keyword id="KW-0904">Protein phosphatase</keyword>
<keyword id="KW-1185">Reference proteome</keyword>
<name>MPI1B_XENLA</name>
<organism>
    <name type="scientific">Xenopus laevis</name>
    <name type="common">African clawed frog</name>
    <dbReference type="NCBI Taxonomy" id="8355"/>
    <lineage>
        <taxon>Eukaryota</taxon>
        <taxon>Metazoa</taxon>
        <taxon>Chordata</taxon>
        <taxon>Craniata</taxon>
        <taxon>Vertebrata</taxon>
        <taxon>Euteleostomi</taxon>
        <taxon>Amphibia</taxon>
        <taxon>Batrachia</taxon>
        <taxon>Anura</taxon>
        <taxon>Pipoidea</taxon>
        <taxon>Pipidae</taxon>
        <taxon>Xenopodinae</taxon>
        <taxon>Xenopus</taxon>
        <taxon>Xenopus</taxon>
    </lineage>
</organism>
<sequence length="550" mass="62183">MAESHIMSSEAPPKTNTGLNFRTNCRMVLNLLREKDCSVTFSPEQPLTPVTDLAVGFSNLSTFSGETPKRCLDLSNLGDETAPLPTESPDRISSGKVESPKAQFVQFDGLFTPDLGWKAKKCPRGNMNSVLPRLLCSTPSFKKTSGGQRSVSNKENEGELFKSPNCKPVALLLPQEVVDSQFSPTPENKVDISLDEDCEMNILGSPISADPPCLDGAHDDIKMQNLDGFADFFSVDEEEMENPPGAVGNLSSSMAILLSGPLLNQDIEVSNVNNISLNRSRLYRSPSMPEKLDRPMLKRPVRPLDSETPVRVKRRRSTSSSLQPQEENFQPQRRGTSLKKTLSLCDVDISTVLDEDCGHRQLIGDFTKVYALPTVTGRHQDLRYITGETLAALIHGDFSSLVEKIFIIDCRYPYEYDGGHIKGALNLHRQEEVTDYFLKQPLTPTMAQKRLIIIFHCEFSSERGPKMCRFLREEDRARNEYPSLYYPELYLLKGGYKDFFPEYKELCEPQSYCPMHHQDFREELLKFRTKCKTSVGDRKRREQIARIMKL</sequence>
<reference key="1">
    <citation type="journal article" date="1992" name="Cell">
        <title>Regulation of the cdc25 protein during the cell cycle in Xenopus extracts.</title>
        <authorList>
            <person name="Kumagai A."/>
            <person name="Dunphy W.G."/>
        </authorList>
    </citation>
    <scope>NUCLEOTIDE SEQUENCE [MRNA]</scope>
    <source>
        <tissue>Oocyte</tissue>
    </source>
</reference>
<reference key="2">
    <citation type="journal article" date="1992" name="Mol. Biol. Cell">
        <title>Periodic changes in phosphorylation of the Xenopus cdc25 phosphatase regulate its activity.</title>
        <authorList>
            <person name="Izumi T."/>
            <person name="Walker D.H."/>
            <person name="Maller J.L."/>
        </authorList>
    </citation>
    <scope>NUCLEOTIDE SEQUENCE [MRNA]</scope>
</reference>